<dbReference type="EC" id="2.7.12.2"/>
<dbReference type="EMBL" id="AF157632">
    <property type="protein sequence ID" value="AAD41399.1"/>
    <property type="molecule type" value="Genomic_DNA"/>
</dbReference>
<dbReference type="EMBL" id="D82023">
    <property type="protein sequence ID" value="BAA82312.1"/>
    <property type="molecule type" value="Genomic_DNA"/>
</dbReference>
<dbReference type="EMBL" id="CU329671">
    <property type="protein sequence ID" value="CAC05249.1"/>
    <property type="molecule type" value="Genomic_DNA"/>
</dbReference>
<dbReference type="PIR" id="T51294">
    <property type="entry name" value="T51294"/>
</dbReference>
<dbReference type="PIR" id="T51992">
    <property type="entry name" value="T51992"/>
</dbReference>
<dbReference type="RefSeq" id="NP_596795.1">
    <property type="nucleotide sequence ID" value="NM_001023815.2"/>
</dbReference>
<dbReference type="SMR" id="Q9Y884"/>
<dbReference type="BioGRID" id="277435">
    <property type="interactions" value="104"/>
</dbReference>
<dbReference type="FunCoup" id="Q9Y884">
    <property type="interactions" value="198"/>
</dbReference>
<dbReference type="IntAct" id="Q9Y884">
    <property type="interactions" value="2"/>
</dbReference>
<dbReference type="STRING" id="284812.Q9Y884"/>
<dbReference type="PaxDb" id="4896-SPBC543.07.1"/>
<dbReference type="EnsemblFungi" id="SPBC543.07.1">
    <property type="protein sequence ID" value="SPBC543.07.1:pep"/>
    <property type="gene ID" value="SPBC543.07"/>
</dbReference>
<dbReference type="GeneID" id="2540919"/>
<dbReference type="KEGG" id="spo:2540919"/>
<dbReference type="PomBase" id="SPBC543.07"/>
<dbReference type="VEuPathDB" id="FungiDB:SPBC543.07"/>
<dbReference type="eggNOG" id="KOG0581">
    <property type="taxonomic scope" value="Eukaryota"/>
</dbReference>
<dbReference type="HOGENOM" id="CLU_000288_63_23_1"/>
<dbReference type="InParanoid" id="Q9Y884"/>
<dbReference type="OMA" id="VGTMYFM"/>
<dbReference type="PhylomeDB" id="Q9Y884"/>
<dbReference type="BRENDA" id="2.7.12.2">
    <property type="organism ID" value="5613"/>
</dbReference>
<dbReference type="Reactome" id="R-SPO-112411">
    <property type="pathway name" value="MAPK1 (ERK2) activation"/>
</dbReference>
<dbReference type="Reactome" id="R-SPO-445144">
    <property type="pathway name" value="Signal transduction by L1"/>
</dbReference>
<dbReference type="Reactome" id="R-SPO-5674135">
    <property type="pathway name" value="MAP2K and MAPK activation"/>
</dbReference>
<dbReference type="Reactome" id="R-SPO-5674499">
    <property type="pathway name" value="Negative feedback regulation of MAPK pathway"/>
</dbReference>
<dbReference type="PRO" id="PR:Q9Y884"/>
<dbReference type="Proteomes" id="UP000002485">
    <property type="component" value="Chromosome II"/>
</dbReference>
<dbReference type="GO" id="GO:0005737">
    <property type="term" value="C:cytoplasm"/>
    <property type="evidence" value="ECO:0000314"/>
    <property type="project" value="PomBase"/>
</dbReference>
<dbReference type="GO" id="GO:0005829">
    <property type="term" value="C:cytosol"/>
    <property type="evidence" value="ECO:0007005"/>
    <property type="project" value="PomBase"/>
</dbReference>
<dbReference type="GO" id="GO:0000935">
    <property type="term" value="C:division septum"/>
    <property type="evidence" value="ECO:0000314"/>
    <property type="project" value="PomBase"/>
</dbReference>
<dbReference type="GO" id="GO:0005634">
    <property type="term" value="C:nucleus"/>
    <property type="evidence" value="ECO:0007005"/>
    <property type="project" value="PomBase"/>
</dbReference>
<dbReference type="GO" id="GO:0005524">
    <property type="term" value="F:ATP binding"/>
    <property type="evidence" value="ECO:0007669"/>
    <property type="project" value="UniProtKB-KW"/>
</dbReference>
<dbReference type="GO" id="GO:0004708">
    <property type="term" value="F:MAP kinase kinase activity"/>
    <property type="evidence" value="ECO:0000314"/>
    <property type="project" value="PomBase"/>
</dbReference>
<dbReference type="GO" id="GO:0106310">
    <property type="term" value="F:protein serine kinase activity"/>
    <property type="evidence" value="ECO:0007669"/>
    <property type="project" value="RHEA"/>
</dbReference>
<dbReference type="GO" id="GO:0004674">
    <property type="term" value="F:protein serine/threonine kinase activity"/>
    <property type="evidence" value="ECO:0007669"/>
    <property type="project" value="UniProtKB-KW"/>
</dbReference>
<dbReference type="GO" id="GO:0004713">
    <property type="term" value="F:protein tyrosine kinase activity"/>
    <property type="evidence" value="ECO:0007669"/>
    <property type="project" value="UniProtKB-KW"/>
</dbReference>
<dbReference type="GO" id="GO:0000196">
    <property type="term" value="P:cell integrity MAPK cascade"/>
    <property type="evidence" value="ECO:0000314"/>
    <property type="project" value="PomBase"/>
</dbReference>
<dbReference type="GO" id="GO:0050850">
    <property type="term" value="P:positive regulation of calcium-mediated signaling"/>
    <property type="evidence" value="ECO:0000315"/>
    <property type="project" value="PomBase"/>
</dbReference>
<dbReference type="GO" id="GO:1903340">
    <property type="term" value="P:positive regulation of cell wall organization or biogenesis"/>
    <property type="evidence" value="ECO:0000269"/>
    <property type="project" value="PomBase"/>
</dbReference>
<dbReference type="GO" id="GO:0060237">
    <property type="term" value="P:regulation of fungal-type cell wall organization"/>
    <property type="evidence" value="ECO:0000318"/>
    <property type="project" value="GO_Central"/>
</dbReference>
<dbReference type="CDD" id="cd06621">
    <property type="entry name" value="PKc_Pek1_like"/>
    <property type="match status" value="1"/>
</dbReference>
<dbReference type="FunFam" id="1.10.510.10:FF:000263">
    <property type="entry name" value="MAP kinase skh1/pek1"/>
    <property type="match status" value="1"/>
</dbReference>
<dbReference type="Gene3D" id="3.30.200.20">
    <property type="entry name" value="Phosphorylase Kinase, domain 1"/>
    <property type="match status" value="1"/>
</dbReference>
<dbReference type="Gene3D" id="1.10.510.10">
    <property type="entry name" value="Transferase(Phosphotransferase) domain 1"/>
    <property type="match status" value="1"/>
</dbReference>
<dbReference type="InterPro" id="IPR011009">
    <property type="entry name" value="Kinase-like_dom_sf"/>
</dbReference>
<dbReference type="InterPro" id="IPR050915">
    <property type="entry name" value="MAP_kinase_kinase"/>
</dbReference>
<dbReference type="InterPro" id="IPR000719">
    <property type="entry name" value="Prot_kinase_dom"/>
</dbReference>
<dbReference type="InterPro" id="IPR017441">
    <property type="entry name" value="Protein_kinase_ATP_BS"/>
</dbReference>
<dbReference type="InterPro" id="IPR008271">
    <property type="entry name" value="Ser/Thr_kinase_AS"/>
</dbReference>
<dbReference type="PANTHER" id="PTHR47448">
    <property type="entry name" value="DUAL SPECIFICITY MITOGEN-ACTIVATED PROTEIN KINASE KINASE DSOR1-LIKE PROTEIN"/>
    <property type="match status" value="1"/>
</dbReference>
<dbReference type="PANTHER" id="PTHR47448:SF5">
    <property type="entry name" value="MITOGEN-ACTIVATED PROTEIN KINASE KINAE MKK2"/>
    <property type="match status" value="1"/>
</dbReference>
<dbReference type="Pfam" id="PF00069">
    <property type="entry name" value="Pkinase"/>
    <property type="match status" value="1"/>
</dbReference>
<dbReference type="SMART" id="SM00220">
    <property type="entry name" value="S_TKc"/>
    <property type="match status" value="1"/>
</dbReference>
<dbReference type="SUPFAM" id="SSF56112">
    <property type="entry name" value="Protein kinase-like (PK-like)"/>
    <property type="match status" value="1"/>
</dbReference>
<dbReference type="PROSITE" id="PS00107">
    <property type="entry name" value="PROTEIN_KINASE_ATP"/>
    <property type="match status" value="1"/>
</dbReference>
<dbReference type="PROSITE" id="PS50011">
    <property type="entry name" value="PROTEIN_KINASE_DOM"/>
    <property type="match status" value="1"/>
</dbReference>
<dbReference type="PROSITE" id="PS00108">
    <property type="entry name" value="PROTEIN_KINASE_ST"/>
    <property type="match status" value="1"/>
</dbReference>
<feature type="chain" id="PRO_0000086655" description="MAP kinase kinase skh1/pek1">
    <location>
        <begin position="1"/>
        <end position="363"/>
    </location>
</feature>
<feature type="domain" description="Protein kinase" evidence="2">
    <location>
        <begin position="79"/>
        <end position="343"/>
    </location>
</feature>
<feature type="active site" description="Proton acceptor" evidence="2 3">
    <location>
        <position position="206"/>
    </location>
</feature>
<feature type="binding site" evidence="2">
    <location>
        <begin position="85"/>
        <end position="93"/>
    </location>
    <ligand>
        <name>ATP</name>
        <dbReference type="ChEBI" id="CHEBI:30616"/>
    </ligand>
</feature>
<feature type="binding site" evidence="2">
    <location>
        <position position="108"/>
    </location>
    <ligand>
        <name>ATP</name>
        <dbReference type="ChEBI" id="CHEBI:30616"/>
    </ligand>
</feature>
<feature type="modified residue" description="Phosphoserine" evidence="1">
    <location>
        <position position="234"/>
    </location>
</feature>
<feature type="modified residue" description="Phosphothreonine" evidence="1">
    <location>
        <position position="238"/>
    </location>
</feature>
<feature type="sequence conflict" description="In Ref. 2; BAA82312." evidence="6" ref="2">
    <original>L</original>
    <variation>K</variation>
    <location>
        <position position="111"/>
    </location>
</feature>
<gene>
    <name type="primary">skh1</name>
    <name type="synonym">mkk1</name>
    <name type="synonym">pek1</name>
    <name type="ORF">SPBC543.07</name>
</gene>
<comment type="function">
    <text evidence="4 5">Involved in the mkh1 signal transduction pathway that plays a role in cell wall integrity. Activates spm1/pmk1 via phosphorylation.</text>
</comment>
<comment type="catalytic activity">
    <reaction>
        <text>L-seryl-[protein] + ATP = O-phospho-L-seryl-[protein] + ADP + H(+)</text>
        <dbReference type="Rhea" id="RHEA:17989"/>
        <dbReference type="Rhea" id="RHEA-COMP:9863"/>
        <dbReference type="Rhea" id="RHEA-COMP:11604"/>
        <dbReference type="ChEBI" id="CHEBI:15378"/>
        <dbReference type="ChEBI" id="CHEBI:29999"/>
        <dbReference type="ChEBI" id="CHEBI:30616"/>
        <dbReference type="ChEBI" id="CHEBI:83421"/>
        <dbReference type="ChEBI" id="CHEBI:456216"/>
        <dbReference type="EC" id="2.7.12.2"/>
    </reaction>
</comment>
<comment type="catalytic activity">
    <reaction>
        <text>L-threonyl-[protein] + ATP = O-phospho-L-threonyl-[protein] + ADP + H(+)</text>
        <dbReference type="Rhea" id="RHEA:46608"/>
        <dbReference type="Rhea" id="RHEA-COMP:11060"/>
        <dbReference type="Rhea" id="RHEA-COMP:11605"/>
        <dbReference type="ChEBI" id="CHEBI:15378"/>
        <dbReference type="ChEBI" id="CHEBI:30013"/>
        <dbReference type="ChEBI" id="CHEBI:30616"/>
        <dbReference type="ChEBI" id="CHEBI:61977"/>
        <dbReference type="ChEBI" id="CHEBI:456216"/>
        <dbReference type="EC" id="2.7.12.2"/>
    </reaction>
</comment>
<comment type="catalytic activity">
    <reaction>
        <text>L-tyrosyl-[protein] + ATP = O-phospho-L-tyrosyl-[protein] + ADP + H(+)</text>
        <dbReference type="Rhea" id="RHEA:10596"/>
        <dbReference type="Rhea" id="RHEA-COMP:10136"/>
        <dbReference type="Rhea" id="RHEA-COMP:20101"/>
        <dbReference type="ChEBI" id="CHEBI:15378"/>
        <dbReference type="ChEBI" id="CHEBI:30616"/>
        <dbReference type="ChEBI" id="CHEBI:46858"/>
        <dbReference type="ChEBI" id="CHEBI:61978"/>
        <dbReference type="ChEBI" id="CHEBI:456216"/>
        <dbReference type="EC" id="2.7.12.2"/>
    </reaction>
</comment>
<comment type="activity regulation">
    <text>Activated by mkh1.</text>
</comment>
<comment type="similarity">
    <text evidence="6">Belongs to the protein kinase superfamily. STE Ser/Thr protein kinase family. MAP kinase kinase subfamily.</text>
</comment>
<organism>
    <name type="scientific">Schizosaccharomyces pombe (strain 972 / ATCC 24843)</name>
    <name type="common">Fission yeast</name>
    <dbReference type="NCBI Taxonomy" id="284812"/>
    <lineage>
        <taxon>Eukaryota</taxon>
        <taxon>Fungi</taxon>
        <taxon>Dikarya</taxon>
        <taxon>Ascomycota</taxon>
        <taxon>Taphrinomycotina</taxon>
        <taxon>Schizosaccharomycetes</taxon>
        <taxon>Schizosaccharomycetales</taxon>
        <taxon>Schizosaccharomycetaceae</taxon>
        <taxon>Schizosaccharomyces</taxon>
    </lineage>
</organism>
<keyword id="KW-0067">ATP-binding</keyword>
<keyword id="KW-0418">Kinase</keyword>
<keyword id="KW-0547">Nucleotide-binding</keyword>
<keyword id="KW-0597">Phosphoprotein</keyword>
<keyword id="KW-1185">Reference proteome</keyword>
<keyword id="KW-0723">Serine/threonine-protein kinase</keyword>
<keyword id="KW-0808">Transferase</keyword>
<keyword id="KW-0829">Tyrosine-protein kinase</keyword>
<reference key="1">
    <citation type="journal article" date="2000" name="J. Cell Sci.">
        <title>Skh1, the MAPKK component of the mkh1 signaling pathway in Schizosaccharomyces pombe.</title>
        <authorList>
            <person name="Loewith R."/>
            <person name="Hubberstey A."/>
            <person name="Young D."/>
        </authorList>
    </citation>
    <scope>NUCLEOTIDE SEQUENCE [GENOMIC DNA]</scope>
    <scope>FUNCTION</scope>
</reference>
<reference key="2">
    <citation type="journal article" date="1999" name="Nature">
        <title>The MAPK kinase Pek1 acts as a phosphorylation-dependent molecular switch.</title>
        <authorList>
            <person name="Sugiura R."/>
            <person name="Toda T."/>
            <person name="Susheela D."/>
            <person name="Shuntoh H."/>
            <person name="Kuno T."/>
        </authorList>
    </citation>
    <scope>NUCLEOTIDE SEQUENCE [GENOMIC DNA]</scope>
    <scope>FUNCTION</scope>
</reference>
<reference key="3">
    <citation type="journal article" date="2002" name="Nature">
        <title>The genome sequence of Schizosaccharomyces pombe.</title>
        <authorList>
            <person name="Wood V."/>
            <person name="Gwilliam R."/>
            <person name="Rajandream M.A."/>
            <person name="Lyne M.H."/>
            <person name="Lyne R."/>
            <person name="Stewart A."/>
            <person name="Sgouros J.G."/>
            <person name="Peat N."/>
            <person name="Hayles J."/>
            <person name="Baker S.G."/>
            <person name="Basham D."/>
            <person name="Bowman S."/>
            <person name="Brooks K."/>
            <person name="Brown D."/>
            <person name="Brown S."/>
            <person name="Chillingworth T."/>
            <person name="Churcher C.M."/>
            <person name="Collins M."/>
            <person name="Connor R."/>
            <person name="Cronin A."/>
            <person name="Davis P."/>
            <person name="Feltwell T."/>
            <person name="Fraser A."/>
            <person name="Gentles S."/>
            <person name="Goble A."/>
            <person name="Hamlin N."/>
            <person name="Harris D.E."/>
            <person name="Hidalgo J."/>
            <person name="Hodgson G."/>
            <person name="Holroyd S."/>
            <person name="Hornsby T."/>
            <person name="Howarth S."/>
            <person name="Huckle E.J."/>
            <person name="Hunt S."/>
            <person name="Jagels K."/>
            <person name="James K.D."/>
            <person name="Jones L."/>
            <person name="Jones M."/>
            <person name="Leather S."/>
            <person name="McDonald S."/>
            <person name="McLean J."/>
            <person name="Mooney P."/>
            <person name="Moule S."/>
            <person name="Mungall K.L."/>
            <person name="Murphy L.D."/>
            <person name="Niblett D."/>
            <person name="Odell C."/>
            <person name="Oliver K."/>
            <person name="O'Neil S."/>
            <person name="Pearson D."/>
            <person name="Quail M.A."/>
            <person name="Rabbinowitsch E."/>
            <person name="Rutherford K.M."/>
            <person name="Rutter S."/>
            <person name="Saunders D."/>
            <person name="Seeger K."/>
            <person name="Sharp S."/>
            <person name="Skelton J."/>
            <person name="Simmonds M.N."/>
            <person name="Squares R."/>
            <person name="Squares S."/>
            <person name="Stevens K."/>
            <person name="Taylor K."/>
            <person name="Taylor R.G."/>
            <person name="Tivey A."/>
            <person name="Walsh S.V."/>
            <person name="Warren T."/>
            <person name="Whitehead S."/>
            <person name="Woodward J.R."/>
            <person name="Volckaert G."/>
            <person name="Aert R."/>
            <person name="Robben J."/>
            <person name="Grymonprez B."/>
            <person name="Weltjens I."/>
            <person name="Vanstreels E."/>
            <person name="Rieger M."/>
            <person name="Schaefer M."/>
            <person name="Mueller-Auer S."/>
            <person name="Gabel C."/>
            <person name="Fuchs M."/>
            <person name="Duesterhoeft A."/>
            <person name="Fritzc C."/>
            <person name="Holzer E."/>
            <person name="Moestl D."/>
            <person name="Hilbert H."/>
            <person name="Borzym K."/>
            <person name="Langer I."/>
            <person name="Beck A."/>
            <person name="Lehrach H."/>
            <person name="Reinhardt R."/>
            <person name="Pohl T.M."/>
            <person name="Eger P."/>
            <person name="Zimmermann W."/>
            <person name="Wedler H."/>
            <person name="Wambutt R."/>
            <person name="Purnelle B."/>
            <person name="Goffeau A."/>
            <person name="Cadieu E."/>
            <person name="Dreano S."/>
            <person name="Gloux S."/>
            <person name="Lelaure V."/>
            <person name="Mottier S."/>
            <person name="Galibert F."/>
            <person name="Aves S.J."/>
            <person name="Xiang Z."/>
            <person name="Hunt C."/>
            <person name="Moore K."/>
            <person name="Hurst S.M."/>
            <person name="Lucas M."/>
            <person name="Rochet M."/>
            <person name="Gaillardin C."/>
            <person name="Tallada V.A."/>
            <person name="Garzon A."/>
            <person name="Thode G."/>
            <person name="Daga R.R."/>
            <person name="Cruzado L."/>
            <person name="Jimenez J."/>
            <person name="Sanchez M."/>
            <person name="del Rey F."/>
            <person name="Benito J."/>
            <person name="Dominguez A."/>
            <person name="Revuelta J.L."/>
            <person name="Moreno S."/>
            <person name="Armstrong J."/>
            <person name="Forsburg S.L."/>
            <person name="Cerutti L."/>
            <person name="Lowe T."/>
            <person name="McCombie W.R."/>
            <person name="Paulsen I."/>
            <person name="Potashkin J."/>
            <person name="Shpakovski G.V."/>
            <person name="Ussery D."/>
            <person name="Barrell B.G."/>
            <person name="Nurse P."/>
        </authorList>
    </citation>
    <scope>NUCLEOTIDE SEQUENCE [LARGE SCALE GENOMIC DNA]</scope>
    <source>
        <strain>972 / ATCC 24843</strain>
    </source>
</reference>
<protein>
    <recommendedName>
        <fullName>MAP kinase kinase skh1/pek1</fullName>
        <ecNumber>2.7.12.2</ecNumber>
    </recommendedName>
</protein>
<proteinExistence type="inferred from homology"/>
<name>SKH1_SCHPO</name>
<sequence>MSKKPVLNLDTSNGFSEEYISHPERNDNQGIVEITDLVFSSESKLTQRKESRDSKTFVPSFLEELDDDHLHELVTNGGILYMNSLGEGVSGSVRKCRIRGTQMIFAMKTVLAAPNTALQKQLLRELKINRSCTSPYIVKYYGACYNNAECQLNIAMEYCGAGSLDAIYKRVRSQGGRTGERPLGKIAFGVLSGLSYLHDRKIIHRDIKPSNILLTSKGQVKLCDFGVSGELVNSLAGTFTGTSYYMAPERISGGSYTISSDIWSLGLTLMEVALNRFPFPPEGSPPPMPIELLSYIINMPPPLLPQEPGIKWSKSFQHFLCVCLDKDKTRRPGPQKMLTHPWVKAFERIHVDMEEFLRQVWSD</sequence>
<accession>Q9Y884</accession>
<accession>Q9UUK6</accession>
<evidence type="ECO:0000250" key="1"/>
<evidence type="ECO:0000255" key="2">
    <source>
        <dbReference type="PROSITE-ProRule" id="PRU00159"/>
    </source>
</evidence>
<evidence type="ECO:0000255" key="3">
    <source>
        <dbReference type="PROSITE-ProRule" id="PRU10027"/>
    </source>
</evidence>
<evidence type="ECO:0000269" key="4">
    <source>
    </source>
</evidence>
<evidence type="ECO:0000269" key="5">
    <source>
    </source>
</evidence>
<evidence type="ECO:0000305" key="6"/>